<reference key="1">
    <citation type="submission" date="2006-12" db="EMBL/GenBank/DDBJ databases">
        <title>Complete sequence of chromosome 1 of Paracoccus denitrificans PD1222.</title>
        <authorList>
            <person name="Copeland A."/>
            <person name="Lucas S."/>
            <person name="Lapidus A."/>
            <person name="Barry K."/>
            <person name="Detter J.C."/>
            <person name="Glavina del Rio T."/>
            <person name="Hammon N."/>
            <person name="Israni S."/>
            <person name="Dalin E."/>
            <person name="Tice H."/>
            <person name="Pitluck S."/>
            <person name="Munk A.C."/>
            <person name="Brettin T."/>
            <person name="Bruce D."/>
            <person name="Han C."/>
            <person name="Tapia R."/>
            <person name="Gilna P."/>
            <person name="Schmutz J."/>
            <person name="Larimer F."/>
            <person name="Land M."/>
            <person name="Hauser L."/>
            <person name="Kyrpides N."/>
            <person name="Lykidis A."/>
            <person name="Spiro S."/>
            <person name="Richardson D.J."/>
            <person name="Moir J.W.B."/>
            <person name="Ferguson S.J."/>
            <person name="van Spanning R.J.M."/>
            <person name="Richardson P."/>
        </authorList>
    </citation>
    <scope>NUCLEOTIDE SEQUENCE [LARGE SCALE GENOMIC DNA]</scope>
    <source>
        <strain>Pd 1222</strain>
    </source>
</reference>
<proteinExistence type="inferred from homology"/>
<gene>
    <name evidence="1" type="primary">rpoA</name>
    <name type="ordered locus">Pden_0784</name>
</gene>
<name>RPOA_PARDP</name>
<comment type="function">
    <text evidence="1">DNA-dependent RNA polymerase catalyzes the transcription of DNA into RNA using the four ribonucleoside triphosphates as substrates.</text>
</comment>
<comment type="catalytic activity">
    <reaction evidence="1">
        <text>RNA(n) + a ribonucleoside 5'-triphosphate = RNA(n+1) + diphosphate</text>
        <dbReference type="Rhea" id="RHEA:21248"/>
        <dbReference type="Rhea" id="RHEA-COMP:14527"/>
        <dbReference type="Rhea" id="RHEA-COMP:17342"/>
        <dbReference type="ChEBI" id="CHEBI:33019"/>
        <dbReference type="ChEBI" id="CHEBI:61557"/>
        <dbReference type="ChEBI" id="CHEBI:140395"/>
        <dbReference type="EC" id="2.7.7.6"/>
    </reaction>
</comment>
<comment type="subunit">
    <text evidence="1">Homodimer. The RNAP catalytic core consists of 2 alpha, 1 beta, 1 beta' and 1 omega subunit. When a sigma factor is associated with the core the holoenzyme is formed, which can initiate transcription.</text>
</comment>
<comment type="domain">
    <text evidence="1">The N-terminal domain is essential for RNAP assembly and basal transcription, whereas the C-terminal domain is involved in interaction with transcriptional regulators and with upstream promoter elements.</text>
</comment>
<comment type="similarity">
    <text evidence="1">Belongs to the RNA polymerase alpha chain family.</text>
</comment>
<protein>
    <recommendedName>
        <fullName evidence="1">DNA-directed RNA polymerase subunit alpha</fullName>
        <shortName evidence="1">RNAP subunit alpha</shortName>
        <ecNumber evidence="1">2.7.7.6</ecNumber>
    </recommendedName>
    <alternativeName>
        <fullName evidence="1">RNA polymerase subunit alpha</fullName>
    </alternativeName>
    <alternativeName>
        <fullName evidence="1">Transcriptase subunit alpha</fullName>
    </alternativeName>
</protein>
<evidence type="ECO:0000255" key="1">
    <source>
        <dbReference type="HAMAP-Rule" id="MF_00059"/>
    </source>
</evidence>
<sequence>MIHKNWAELIKPTQLEIKPGADSSRVATVVAEPLERGFGLTLGNALRRVLLSSLQGAAITSVQIDNVLHEFSSVPGVREDVTDIVLNLKGVTLKMDVDAPKRLTLSAKGPGEVKAGDIQESAGITILNRDHVICHLDEGAELHMELAVANGKGYVAADKNRPEDAPIGLIPIDAIFSPVKRVSYEVTPTREGQVLDYDKLTMKVETDGSLTPEDAVAYAARIIQDQLSVFVNFDEPETATRSDAEDGLEFDPRLLKKVDELELSVRSANCLKNDNIVYIGDLIQKTEAEMLRTPNFGRKSLNEIKEVLSGMGLHLGMDVVDWPPENIEDLAKRFDDQF</sequence>
<dbReference type="EC" id="2.7.7.6" evidence="1"/>
<dbReference type="EMBL" id="CP000489">
    <property type="protein sequence ID" value="ABL68896.1"/>
    <property type="molecule type" value="Genomic_DNA"/>
</dbReference>
<dbReference type="RefSeq" id="WP_011747124.1">
    <property type="nucleotide sequence ID" value="NC_008686.1"/>
</dbReference>
<dbReference type="SMR" id="A1B052"/>
<dbReference type="STRING" id="318586.Pden_0784"/>
<dbReference type="EnsemblBacteria" id="ABL68896">
    <property type="protein sequence ID" value="ABL68896"/>
    <property type="gene ID" value="Pden_0784"/>
</dbReference>
<dbReference type="GeneID" id="93452008"/>
<dbReference type="KEGG" id="pde:Pden_0784"/>
<dbReference type="eggNOG" id="COG0202">
    <property type="taxonomic scope" value="Bacteria"/>
</dbReference>
<dbReference type="HOGENOM" id="CLU_053084_0_0_5"/>
<dbReference type="OrthoDB" id="9805706at2"/>
<dbReference type="Proteomes" id="UP000000361">
    <property type="component" value="Chromosome 1"/>
</dbReference>
<dbReference type="GO" id="GO:0005737">
    <property type="term" value="C:cytoplasm"/>
    <property type="evidence" value="ECO:0007669"/>
    <property type="project" value="UniProtKB-ARBA"/>
</dbReference>
<dbReference type="GO" id="GO:0000428">
    <property type="term" value="C:DNA-directed RNA polymerase complex"/>
    <property type="evidence" value="ECO:0007669"/>
    <property type="project" value="UniProtKB-KW"/>
</dbReference>
<dbReference type="GO" id="GO:0003677">
    <property type="term" value="F:DNA binding"/>
    <property type="evidence" value="ECO:0007669"/>
    <property type="project" value="UniProtKB-UniRule"/>
</dbReference>
<dbReference type="GO" id="GO:0003899">
    <property type="term" value="F:DNA-directed RNA polymerase activity"/>
    <property type="evidence" value="ECO:0007669"/>
    <property type="project" value="UniProtKB-UniRule"/>
</dbReference>
<dbReference type="GO" id="GO:0046983">
    <property type="term" value="F:protein dimerization activity"/>
    <property type="evidence" value="ECO:0007669"/>
    <property type="project" value="InterPro"/>
</dbReference>
<dbReference type="GO" id="GO:0006351">
    <property type="term" value="P:DNA-templated transcription"/>
    <property type="evidence" value="ECO:0007669"/>
    <property type="project" value="UniProtKB-UniRule"/>
</dbReference>
<dbReference type="CDD" id="cd06928">
    <property type="entry name" value="RNAP_alpha_NTD"/>
    <property type="match status" value="1"/>
</dbReference>
<dbReference type="FunFam" id="1.10.150.20:FF:000001">
    <property type="entry name" value="DNA-directed RNA polymerase subunit alpha"/>
    <property type="match status" value="1"/>
</dbReference>
<dbReference type="FunFam" id="2.170.120.12:FF:000001">
    <property type="entry name" value="DNA-directed RNA polymerase subunit alpha"/>
    <property type="match status" value="1"/>
</dbReference>
<dbReference type="Gene3D" id="1.10.150.20">
    <property type="entry name" value="5' to 3' exonuclease, C-terminal subdomain"/>
    <property type="match status" value="1"/>
</dbReference>
<dbReference type="Gene3D" id="2.170.120.12">
    <property type="entry name" value="DNA-directed RNA polymerase, insert domain"/>
    <property type="match status" value="1"/>
</dbReference>
<dbReference type="Gene3D" id="3.30.1360.10">
    <property type="entry name" value="RNA polymerase, RBP11-like subunit"/>
    <property type="match status" value="1"/>
</dbReference>
<dbReference type="HAMAP" id="MF_00059">
    <property type="entry name" value="RNApol_bact_RpoA"/>
    <property type="match status" value="1"/>
</dbReference>
<dbReference type="InterPro" id="IPR011262">
    <property type="entry name" value="DNA-dir_RNA_pol_insert"/>
</dbReference>
<dbReference type="InterPro" id="IPR011263">
    <property type="entry name" value="DNA-dir_RNA_pol_RpoA/D/Rpb3"/>
</dbReference>
<dbReference type="InterPro" id="IPR011773">
    <property type="entry name" value="DNA-dir_RpoA"/>
</dbReference>
<dbReference type="InterPro" id="IPR036603">
    <property type="entry name" value="RBP11-like"/>
</dbReference>
<dbReference type="InterPro" id="IPR011260">
    <property type="entry name" value="RNAP_asu_C"/>
</dbReference>
<dbReference type="InterPro" id="IPR036643">
    <property type="entry name" value="RNApol_insert_sf"/>
</dbReference>
<dbReference type="NCBIfam" id="NF003513">
    <property type="entry name" value="PRK05182.1-2"/>
    <property type="match status" value="1"/>
</dbReference>
<dbReference type="NCBIfam" id="NF003519">
    <property type="entry name" value="PRK05182.2-5"/>
    <property type="match status" value="1"/>
</dbReference>
<dbReference type="NCBIfam" id="TIGR02027">
    <property type="entry name" value="rpoA"/>
    <property type="match status" value="1"/>
</dbReference>
<dbReference type="Pfam" id="PF01000">
    <property type="entry name" value="RNA_pol_A_bac"/>
    <property type="match status" value="1"/>
</dbReference>
<dbReference type="Pfam" id="PF03118">
    <property type="entry name" value="RNA_pol_A_CTD"/>
    <property type="match status" value="1"/>
</dbReference>
<dbReference type="Pfam" id="PF01193">
    <property type="entry name" value="RNA_pol_L"/>
    <property type="match status" value="1"/>
</dbReference>
<dbReference type="SMART" id="SM00662">
    <property type="entry name" value="RPOLD"/>
    <property type="match status" value="1"/>
</dbReference>
<dbReference type="SUPFAM" id="SSF47789">
    <property type="entry name" value="C-terminal domain of RNA polymerase alpha subunit"/>
    <property type="match status" value="1"/>
</dbReference>
<dbReference type="SUPFAM" id="SSF56553">
    <property type="entry name" value="Insert subdomain of RNA polymerase alpha subunit"/>
    <property type="match status" value="1"/>
</dbReference>
<dbReference type="SUPFAM" id="SSF55257">
    <property type="entry name" value="RBP11-like subunits of RNA polymerase"/>
    <property type="match status" value="1"/>
</dbReference>
<accession>A1B052</accession>
<organism>
    <name type="scientific">Paracoccus denitrificans (strain Pd 1222)</name>
    <dbReference type="NCBI Taxonomy" id="318586"/>
    <lineage>
        <taxon>Bacteria</taxon>
        <taxon>Pseudomonadati</taxon>
        <taxon>Pseudomonadota</taxon>
        <taxon>Alphaproteobacteria</taxon>
        <taxon>Rhodobacterales</taxon>
        <taxon>Paracoccaceae</taxon>
        <taxon>Paracoccus</taxon>
    </lineage>
</organism>
<feature type="chain" id="PRO_0000296846" description="DNA-directed RNA polymerase subunit alpha">
    <location>
        <begin position="1"/>
        <end position="338"/>
    </location>
</feature>
<feature type="region of interest" description="Alpha N-terminal domain (alpha-NTD)" evidence="1">
    <location>
        <begin position="1"/>
        <end position="234"/>
    </location>
</feature>
<feature type="region of interest" description="Alpha C-terminal domain (alpha-CTD)" evidence="1">
    <location>
        <begin position="250"/>
        <end position="338"/>
    </location>
</feature>
<keyword id="KW-0240">DNA-directed RNA polymerase</keyword>
<keyword id="KW-0548">Nucleotidyltransferase</keyword>
<keyword id="KW-1185">Reference proteome</keyword>
<keyword id="KW-0804">Transcription</keyword>
<keyword id="KW-0808">Transferase</keyword>